<organism>
    <name type="scientific">Pseudoalteromonas atlantica (strain T6c / ATCC BAA-1087)</name>
    <dbReference type="NCBI Taxonomy" id="3042615"/>
    <lineage>
        <taxon>Bacteria</taxon>
        <taxon>Pseudomonadati</taxon>
        <taxon>Pseudomonadota</taxon>
        <taxon>Gammaproteobacteria</taxon>
        <taxon>Alteromonadales</taxon>
        <taxon>Alteromonadaceae</taxon>
        <taxon>Paraglaciecola</taxon>
    </lineage>
</organism>
<dbReference type="EMBL" id="CP000388">
    <property type="protein sequence ID" value="ABG39528.1"/>
    <property type="molecule type" value="Genomic_DNA"/>
</dbReference>
<dbReference type="RefSeq" id="WP_006990569.1">
    <property type="nucleotide sequence ID" value="NC_008228.1"/>
</dbReference>
<dbReference type="SMR" id="Q15X60"/>
<dbReference type="STRING" id="342610.Patl_1002"/>
<dbReference type="KEGG" id="pat:Patl_1002"/>
<dbReference type="eggNOG" id="COG0199">
    <property type="taxonomic scope" value="Bacteria"/>
</dbReference>
<dbReference type="HOGENOM" id="CLU_139869_0_1_6"/>
<dbReference type="OrthoDB" id="9810484at2"/>
<dbReference type="Proteomes" id="UP000001981">
    <property type="component" value="Chromosome"/>
</dbReference>
<dbReference type="GO" id="GO:0005737">
    <property type="term" value="C:cytoplasm"/>
    <property type="evidence" value="ECO:0007669"/>
    <property type="project" value="UniProtKB-ARBA"/>
</dbReference>
<dbReference type="GO" id="GO:0015935">
    <property type="term" value="C:small ribosomal subunit"/>
    <property type="evidence" value="ECO:0007669"/>
    <property type="project" value="TreeGrafter"/>
</dbReference>
<dbReference type="GO" id="GO:0019843">
    <property type="term" value="F:rRNA binding"/>
    <property type="evidence" value="ECO:0007669"/>
    <property type="project" value="UniProtKB-UniRule"/>
</dbReference>
<dbReference type="GO" id="GO:0003735">
    <property type="term" value="F:structural constituent of ribosome"/>
    <property type="evidence" value="ECO:0007669"/>
    <property type="project" value="InterPro"/>
</dbReference>
<dbReference type="GO" id="GO:0006412">
    <property type="term" value="P:translation"/>
    <property type="evidence" value="ECO:0007669"/>
    <property type="project" value="UniProtKB-UniRule"/>
</dbReference>
<dbReference type="FunFam" id="1.10.287.1480:FF:000001">
    <property type="entry name" value="30S ribosomal protein S14"/>
    <property type="match status" value="1"/>
</dbReference>
<dbReference type="Gene3D" id="1.10.287.1480">
    <property type="match status" value="1"/>
</dbReference>
<dbReference type="HAMAP" id="MF_00537">
    <property type="entry name" value="Ribosomal_uS14_1"/>
    <property type="match status" value="1"/>
</dbReference>
<dbReference type="InterPro" id="IPR001209">
    <property type="entry name" value="Ribosomal_uS14"/>
</dbReference>
<dbReference type="InterPro" id="IPR023036">
    <property type="entry name" value="Ribosomal_uS14_bac/plastid"/>
</dbReference>
<dbReference type="InterPro" id="IPR018271">
    <property type="entry name" value="Ribosomal_uS14_CS"/>
</dbReference>
<dbReference type="NCBIfam" id="NF006477">
    <property type="entry name" value="PRK08881.1"/>
    <property type="match status" value="1"/>
</dbReference>
<dbReference type="PANTHER" id="PTHR19836">
    <property type="entry name" value="30S RIBOSOMAL PROTEIN S14"/>
    <property type="match status" value="1"/>
</dbReference>
<dbReference type="PANTHER" id="PTHR19836:SF19">
    <property type="entry name" value="SMALL RIBOSOMAL SUBUNIT PROTEIN US14M"/>
    <property type="match status" value="1"/>
</dbReference>
<dbReference type="Pfam" id="PF00253">
    <property type="entry name" value="Ribosomal_S14"/>
    <property type="match status" value="1"/>
</dbReference>
<dbReference type="SUPFAM" id="SSF57716">
    <property type="entry name" value="Glucocorticoid receptor-like (DNA-binding domain)"/>
    <property type="match status" value="1"/>
</dbReference>
<dbReference type="PROSITE" id="PS00527">
    <property type="entry name" value="RIBOSOMAL_S14"/>
    <property type="match status" value="1"/>
</dbReference>
<accession>Q15X60</accession>
<keyword id="KW-0687">Ribonucleoprotein</keyword>
<keyword id="KW-0689">Ribosomal protein</keyword>
<keyword id="KW-0694">RNA-binding</keyword>
<keyword id="KW-0699">rRNA-binding</keyword>
<comment type="function">
    <text evidence="1">Binds 16S rRNA, required for the assembly of 30S particles and may also be responsible for determining the conformation of the 16S rRNA at the A site.</text>
</comment>
<comment type="subunit">
    <text evidence="1">Part of the 30S ribosomal subunit. Contacts proteins S3 and S10.</text>
</comment>
<comment type="similarity">
    <text evidence="1">Belongs to the universal ribosomal protein uS14 family.</text>
</comment>
<reference key="1">
    <citation type="submission" date="2006-06" db="EMBL/GenBank/DDBJ databases">
        <title>Complete sequence of Pseudoalteromonas atlantica T6c.</title>
        <authorList>
            <consortium name="US DOE Joint Genome Institute"/>
            <person name="Copeland A."/>
            <person name="Lucas S."/>
            <person name="Lapidus A."/>
            <person name="Barry K."/>
            <person name="Detter J.C."/>
            <person name="Glavina del Rio T."/>
            <person name="Hammon N."/>
            <person name="Israni S."/>
            <person name="Dalin E."/>
            <person name="Tice H."/>
            <person name="Pitluck S."/>
            <person name="Saunders E."/>
            <person name="Brettin T."/>
            <person name="Bruce D."/>
            <person name="Han C."/>
            <person name="Tapia R."/>
            <person name="Gilna P."/>
            <person name="Schmutz J."/>
            <person name="Larimer F."/>
            <person name="Land M."/>
            <person name="Hauser L."/>
            <person name="Kyrpides N."/>
            <person name="Kim E."/>
            <person name="Karls A.C."/>
            <person name="Bartlett D."/>
            <person name="Higgins B.P."/>
            <person name="Richardson P."/>
        </authorList>
    </citation>
    <scope>NUCLEOTIDE SEQUENCE [LARGE SCALE GENOMIC DNA]</scope>
    <source>
        <strain>T6c / ATCC BAA-1087</strain>
    </source>
</reference>
<proteinExistence type="inferred from homology"/>
<feature type="chain" id="PRO_1000128510" description="Small ribosomal subunit protein uS14">
    <location>
        <begin position="1"/>
        <end position="101"/>
    </location>
</feature>
<protein>
    <recommendedName>
        <fullName evidence="1">Small ribosomal subunit protein uS14</fullName>
    </recommendedName>
    <alternativeName>
        <fullName evidence="2">30S ribosomal protein S14</fullName>
    </alternativeName>
</protein>
<sequence>MAKESMKAREVKRAKLVAKFATKRAELKATISNVNSSDEERWDAVLKLQQLPRDSARTRQQNRCRITGRPHGFLRKFGLSRIKLREAAMRGEVPGLKKASW</sequence>
<gene>
    <name evidence="1" type="primary">rpsN</name>
    <name type="ordered locus">Patl_1002</name>
</gene>
<evidence type="ECO:0000255" key="1">
    <source>
        <dbReference type="HAMAP-Rule" id="MF_00537"/>
    </source>
</evidence>
<evidence type="ECO:0000305" key="2"/>
<name>RS14_PSEA6</name>